<sequence>MEKRTSCSVQTSTNCDNSLEILNSAHQATGAVQMRIKNANSHQDRQSQTKSMILTDAGKVTEPISRHRRNHSQHVLKDVIPPLEHPMVEKEGYLQKAKIADGGKKLRKNWSTSWIVLSGRKIEFYKDSKQQALPNMKTRHNVESVDLCGAHIEWAKEKSSRKSVFQITTVSGNEFLLQSDIDFLILDWFQAIKNAIDRLPKNPSCGSLELFNLQRSSSSELPSHCHIDRKEQKPEHRKSFMFRLHHSASDTSDKNRVKSRLKKFISRRPSLKTLQEKGLIKDQIFGSHLHTVCEREHSTVPWFVKQCIEAVEKRGLDVDGIYRVSGNLATIQKLRFIVNQEEKLNLDDSQWEDIHVVTGALKMFFRELSEPLFPYSFFERFVEAIKKQDSNEKIETMRSLVKRLPPPNHDTMKILFRHLTKIVAKASQNLMSTQSLGIVFGPTLLRAENESGNVAVHMVYQNQIAEFMLTEYDKIFSSEED</sequence>
<name>RHG15_MOUSE</name>
<dbReference type="EMBL" id="AK031022">
    <property type="protein sequence ID" value="BAC27217.1"/>
    <property type="molecule type" value="mRNA"/>
</dbReference>
<dbReference type="EMBL" id="AK170537">
    <property type="protein sequence ID" value="BAE41865.1"/>
    <property type="molecule type" value="mRNA"/>
</dbReference>
<dbReference type="EMBL" id="AK172407">
    <property type="protein sequence ID" value="BAE42992.1"/>
    <property type="molecule type" value="mRNA"/>
</dbReference>
<dbReference type="EMBL" id="AL732320">
    <property type="status" value="NOT_ANNOTATED_CDS"/>
    <property type="molecule type" value="Genomic_DNA"/>
</dbReference>
<dbReference type="EMBL" id="AL844535">
    <property type="status" value="NOT_ANNOTATED_CDS"/>
    <property type="molecule type" value="Genomic_DNA"/>
</dbReference>
<dbReference type="EMBL" id="AL845160">
    <property type="status" value="NOT_ANNOTATED_CDS"/>
    <property type="molecule type" value="Genomic_DNA"/>
</dbReference>
<dbReference type="EMBL" id="AL928611">
    <property type="status" value="NOT_ANNOTATED_CDS"/>
    <property type="molecule type" value="Genomic_DNA"/>
</dbReference>
<dbReference type="EMBL" id="AL935152">
    <property type="status" value="NOT_ANNOTATED_CDS"/>
    <property type="molecule type" value="Genomic_DNA"/>
</dbReference>
<dbReference type="EMBL" id="BC024887">
    <property type="protein sequence ID" value="AAH24887.1"/>
    <property type="molecule type" value="mRNA"/>
</dbReference>
<dbReference type="EMBL" id="BC034881">
    <property type="protein sequence ID" value="AAH34881.1"/>
    <property type="status" value="ALT_INIT"/>
    <property type="molecule type" value="mRNA"/>
</dbReference>
<dbReference type="CCDS" id="CCDS16019.1">
    <molecule id="Q811M1-1"/>
</dbReference>
<dbReference type="RefSeq" id="NP_722542.2">
    <molecule id="Q811M1-1"/>
    <property type="nucleotide sequence ID" value="NM_153820.3"/>
</dbReference>
<dbReference type="RefSeq" id="XP_006498462.1">
    <property type="nucleotide sequence ID" value="XM_006498399.3"/>
</dbReference>
<dbReference type="SMR" id="Q811M1"/>
<dbReference type="BioGRID" id="217972">
    <property type="interactions" value="42"/>
</dbReference>
<dbReference type="FunCoup" id="Q811M1">
    <property type="interactions" value="763"/>
</dbReference>
<dbReference type="IntAct" id="Q811M1">
    <property type="interactions" value="1"/>
</dbReference>
<dbReference type="STRING" id="10090.ENSMUSP00000056461"/>
<dbReference type="iPTMnet" id="Q811M1"/>
<dbReference type="PhosphoSitePlus" id="Q811M1"/>
<dbReference type="jPOST" id="Q811M1"/>
<dbReference type="PaxDb" id="10090-ENSMUSP00000056461"/>
<dbReference type="ProteomicsDB" id="255200">
    <molecule id="Q811M1-1"/>
</dbReference>
<dbReference type="ProteomicsDB" id="255201">
    <molecule id="Q811M1-2"/>
</dbReference>
<dbReference type="ProteomicsDB" id="255202">
    <molecule id="Q811M1-3"/>
</dbReference>
<dbReference type="ProteomicsDB" id="255203">
    <molecule id="Q811M1-4"/>
</dbReference>
<dbReference type="Antibodypedia" id="33613">
    <property type="antibodies" value="123 antibodies from 20 providers"/>
</dbReference>
<dbReference type="DNASU" id="76117"/>
<dbReference type="Ensembl" id="ENSMUST00000055776.8">
    <molecule id="Q811M1-1"/>
    <property type="protein sequence ID" value="ENSMUSP00000056461.7"/>
    <property type="gene ID" value="ENSMUSG00000049744.16"/>
</dbReference>
<dbReference type="Ensembl" id="ENSMUST00000112822.8">
    <molecule id="Q811M1-4"/>
    <property type="protein sequence ID" value="ENSMUSP00000108441.2"/>
    <property type="gene ID" value="ENSMUSG00000049744.16"/>
</dbReference>
<dbReference type="GeneID" id="76117"/>
<dbReference type="KEGG" id="mmu:76117"/>
<dbReference type="UCSC" id="uc008jou.2">
    <molecule id="Q811M1-3"/>
    <property type="organism name" value="mouse"/>
</dbReference>
<dbReference type="UCSC" id="uc008jov.1">
    <molecule id="Q811M1-2"/>
    <property type="organism name" value="mouse"/>
</dbReference>
<dbReference type="UCSC" id="uc008jow.1">
    <molecule id="Q811M1-1"/>
    <property type="organism name" value="mouse"/>
</dbReference>
<dbReference type="AGR" id="MGI:1923367"/>
<dbReference type="CTD" id="55843"/>
<dbReference type="MGI" id="MGI:1923367">
    <property type="gene designation" value="Arhgap15"/>
</dbReference>
<dbReference type="VEuPathDB" id="HostDB:ENSMUSG00000049744"/>
<dbReference type="eggNOG" id="KOG1449">
    <property type="taxonomic scope" value="Eukaryota"/>
</dbReference>
<dbReference type="eggNOG" id="KOG1450">
    <property type="taxonomic scope" value="Eukaryota"/>
</dbReference>
<dbReference type="GeneTree" id="ENSGT00950000182860"/>
<dbReference type="HOGENOM" id="CLU_2196054_0_0_1"/>
<dbReference type="InParanoid" id="Q811M1"/>
<dbReference type="OMA" id="DHNQWED"/>
<dbReference type="OrthoDB" id="79452at2759"/>
<dbReference type="PhylomeDB" id="Q811M1"/>
<dbReference type="TreeFam" id="TF329345"/>
<dbReference type="Reactome" id="R-MMU-9013149">
    <property type="pathway name" value="RAC1 GTPase cycle"/>
</dbReference>
<dbReference type="Reactome" id="R-MMU-9013423">
    <property type="pathway name" value="RAC3 GTPase cycle"/>
</dbReference>
<dbReference type="BioGRID-ORCS" id="76117">
    <property type="hits" value="1 hit in 76 CRISPR screens"/>
</dbReference>
<dbReference type="ChiTaRS" id="Arhgap15">
    <property type="organism name" value="mouse"/>
</dbReference>
<dbReference type="PRO" id="PR:Q811M1"/>
<dbReference type="Proteomes" id="UP000000589">
    <property type="component" value="Chromosome 2"/>
</dbReference>
<dbReference type="RNAct" id="Q811M1">
    <property type="molecule type" value="protein"/>
</dbReference>
<dbReference type="Bgee" id="ENSMUSG00000049744">
    <property type="expression patterns" value="Expressed in granulocyte and 162 other cell types or tissues"/>
</dbReference>
<dbReference type="ExpressionAtlas" id="Q811M1">
    <property type="expression patterns" value="baseline and differential"/>
</dbReference>
<dbReference type="GO" id="GO:0005737">
    <property type="term" value="C:cytoplasm"/>
    <property type="evidence" value="ECO:0007669"/>
    <property type="project" value="UniProtKB-SubCell"/>
</dbReference>
<dbReference type="GO" id="GO:0005654">
    <property type="term" value="C:nucleoplasm"/>
    <property type="evidence" value="ECO:0007669"/>
    <property type="project" value="Ensembl"/>
</dbReference>
<dbReference type="GO" id="GO:0005886">
    <property type="term" value="C:plasma membrane"/>
    <property type="evidence" value="ECO:0007669"/>
    <property type="project" value="Ensembl"/>
</dbReference>
<dbReference type="GO" id="GO:0005096">
    <property type="term" value="F:GTPase activator activity"/>
    <property type="evidence" value="ECO:0000266"/>
    <property type="project" value="MGI"/>
</dbReference>
<dbReference type="GO" id="GO:0008360">
    <property type="term" value="P:regulation of cell shape"/>
    <property type="evidence" value="ECO:0000266"/>
    <property type="project" value="MGI"/>
</dbReference>
<dbReference type="GO" id="GO:0007165">
    <property type="term" value="P:signal transduction"/>
    <property type="evidence" value="ECO:0007669"/>
    <property type="project" value="InterPro"/>
</dbReference>
<dbReference type="CDD" id="cd13233">
    <property type="entry name" value="PH_ARHGAP9-like"/>
    <property type="match status" value="1"/>
</dbReference>
<dbReference type="CDD" id="cd04403">
    <property type="entry name" value="RhoGAP_ARHGAP27_15_12_9"/>
    <property type="match status" value="1"/>
</dbReference>
<dbReference type="FunFam" id="1.10.555.10:FF:000003">
    <property type="entry name" value="Putative rho GTPase-activating protein 12"/>
    <property type="match status" value="1"/>
</dbReference>
<dbReference type="FunFam" id="2.30.29.30:FF:000260">
    <property type="entry name" value="Rho GTPase activating protein 15"/>
    <property type="match status" value="1"/>
</dbReference>
<dbReference type="Gene3D" id="2.30.29.30">
    <property type="entry name" value="Pleckstrin-homology domain (PH domain)/Phosphotyrosine-binding domain (PTB)"/>
    <property type="match status" value="1"/>
</dbReference>
<dbReference type="Gene3D" id="1.10.555.10">
    <property type="entry name" value="Rho GTPase activation protein"/>
    <property type="match status" value="1"/>
</dbReference>
<dbReference type="InterPro" id="IPR011993">
    <property type="entry name" value="PH-like_dom_sf"/>
</dbReference>
<dbReference type="InterPro" id="IPR001849">
    <property type="entry name" value="PH_domain"/>
</dbReference>
<dbReference type="InterPro" id="IPR050729">
    <property type="entry name" value="Rho-GAP"/>
</dbReference>
<dbReference type="InterPro" id="IPR008936">
    <property type="entry name" value="Rho_GTPase_activation_prot"/>
</dbReference>
<dbReference type="InterPro" id="IPR000198">
    <property type="entry name" value="RhoGAP_dom"/>
</dbReference>
<dbReference type="PANTHER" id="PTHR23176:SF108">
    <property type="entry name" value="RHO GTPASE-ACTIVATING PROTEIN 15"/>
    <property type="match status" value="1"/>
</dbReference>
<dbReference type="PANTHER" id="PTHR23176">
    <property type="entry name" value="RHO/RAC/CDC GTPASE-ACTIVATING PROTEIN"/>
    <property type="match status" value="1"/>
</dbReference>
<dbReference type="Pfam" id="PF00169">
    <property type="entry name" value="PH"/>
    <property type="match status" value="1"/>
</dbReference>
<dbReference type="Pfam" id="PF00620">
    <property type="entry name" value="RhoGAP"/>
    <property type="match status" value="1"/>
</dbReference>
<dbReference type="SMART" id="SM00233">
    <property type="entry name" value="PH"/>
    <property type="match status" value="1"/>
</dbReference>
<dbReference type="SMART" id="SM00324">
    <property type="entry name" value="RhoGAP"/>
    <property type="match status" value="1"/>
</dbReference>
<dbReference type="SUPFAM" id="SSF48350">
    <property type="entry name" value="GTPase activation domain, GAP"/>
    <property type="match status" value="1"/>
</dbReference>
<dbReference type="SUPFAM" id="SSF50729">
    <property type="entry name" value="PH domain-like"/>
    <property type="match status" value="1"/>
</dbReference>
<dbReference type="PROSITE" id="PS50003">
    <property type="entry name" value="PH_DOMAIN"/>
    <property type="match status" value="1"/>
</dbReference>
<dbReference type="PROSITE" id="PS50238">
    <property type="entry name" value="RHOGAP"/>
    <property type="match status" value="1"/>
</dbReference>
<feature type="chain" id="PRO_0000317575" description="Rho GTPase-activating protein 15">
    <location>
        <begin position="1"/>
        <end position="481"/>
    </location>
</feature>
<feature type="domain" description="PH" evidence="4">
    <location>
        <begin position="87"/>
        <end position="197"/>
    </location>
</feature>
<feature type="domain" description="Rho-GAP" evidence="5">
    <location>
        <begin position="287"/>
        <end position="476"/>
    </location>
</feature>
<feature type="site" description="Arginine finger; crucial for GTP hydrolysis by stabilizing the transition state" evidence="5">
    <location>
        <position position="323"/>
    </location>
</feature>
<feature type="modified residue" description="Phosphoserine" evidence="2">
    <location>
        <position position="51"/>
    </location>
</feature>
<feature type="modified residue" description="Phosphoserine" evidence="2">
    <location>
        <position position="111"/>
    </location>
</feature>
<feature type="modified residue" description="Phosphoserine" evidence="8">
    <location>
        <position position="204"/>
    </location>
</feature>
<feature type="modified residue" description="Phosphoserine" evidence="3">
    <location>
        <position position="207"/>
    </location>
</feature>
<feature type="modified residue" description="Phosphoserine" evidence="3">
    <location>
        <position position="249"/>
    </location>
</feature>
<feature type="splice variant" id="VSP_031048" description="In isoform 4." evidence="6">
    <location>
        <begin position="109"/>
        <end position="481"/>
    </location>
</feature>
<feature type="splice variant" id="VSP_031049" description="In isoform 3." evidence="6">
    <original>ITTVSGNEFLLQSDIDFLIL</original>
    <variation>VRMPPVLNFLLFPPNLSPLR</variation>
    <location>
        <begin position="167"/>
        <end position="186"/>
    </location>
</feature>
<feature type="splice variant" id="VSP_031050" description="In isoform 3." evidence="6">
    <location>
        <begin position="187"/>
        <end position="481"/>
    </location>
</feature>
<feature type="splice variant" id="VSP_031051" description="In isoform 2." evidence="6">
    <original>L</original>
    <variation>G</variation>
    <location>
        <position position="316"/>
    </location>
</feature>
<feature type="splice variant" id="VSP_031052" description="In isoform 2." evidence="6">
    <location>
        <begin position="317"/>
        <end position="481"/>
    </location>
</feature>
<feature type="sequence conflict" description="In Ref. 1; BAE41865." evidence="7" ref="1">
    <original>Q</original>
    <variation>K</variation>
    <location>
        <position position="46"/>
    </location>
</feature>
<gene>
    <name type="primary">Arhgap15</name>
</gene>
<keyword id="KW-0025">Alternative splicing</keyword>
<keyword id="KW-0963">Cytoplasm</keyword>
<keyword id="KW-0343">GTPase activation</keyword>
<keyword id="KW-0472">Membrane</keyword>
<keyword id="KW-0597">Phosphoprotein</keyword>
<keyword id="KW-1185">Reference proteome</keyword>
<reference key="1">
    <citation type="journal article" date="2005" name="Science">
        <title>The transcriptional landscape of the mammalian genome.</title>
        <authorList>
            <person name="Carninci P."/>
            <person name="Kasukawa T."/>
            <person name="Katayama S."/>
            <person name="Gough J."/>
            <person name="Frith M.C."/>
            <person name="Maeda N."/>
            <person name="Oyama R."/>
            <person name="Ravasi T."/>
            <person name="Lenhard B."/>
            <person name="Wells C."/>
            <person name="Kodzius R."/>
            <person name="Shimokawa K."/>
            <person name="Bajic V.B."/>
            <person name="Brenner S.E."/>
            <person name="Batalov S."/>
            <person name="Forrest A.R."/>
            <person name="Zavolan M."/>
            <person name="Davis M.J."/>
            <person name="Wilming L.G."/>
            <person name="Aidinis V."/>
            <person name="Allen J.E."/>
            <person name="Ambesi-Impiombato A."/>
            <person name="Apweiler R."/>
            <person name="Aturaliya R.N."/>
            <person name="Bailey T.L."/>
            <person name="Bansal M."/>
            <person name="Baxter L."/>
            <person name="Beisel K.W."/>
            <person name="Bersano T."/>
            <person name="Bono H."/>
            <person name="Chalk A.M."/>
            <person name="Chiu K.P."/>
            <person name="Choudhary V."/>
            <person name="Christoffels A."/>
            <person name="Clutterbuck D.R."/>
            <person name="Crowe M.L."/>
            <person name="Dalla E."/>
            <person name="Dalrymple B.P."/>
            <person name="de Bono B."/>
            <person name="Della Gatta G."/>
            <person name="di Bernardo D."/>
            <person name="Down T."/>
            <person name="Engstrom P."/>
            <person name="Fagiolini M."/>
            <person name="Faulkner G."/>
            <person name="Fletcher C.F."/>
            <person name="Fukushima T."/>
            <person name="Furuno M."/>
            <person name="Futaki S."/>
            <person name="Gariboldi M."/>
            <person name="Georgii-Hemming P."/>
            <person name="Gingeras T.R."/>
            <person name="Gojobori T."/>
            <person name="Green R.E."/>
            <person name="Gustincich S."/>
            <person name="Harbers M."/>
            <person name="Hayashi Y."/>
            <person name="Hensch T.K."/>
            <person name="Hirokawa N."/>
            <person name="Hill D."/>
            <person name="Huminiecki L."/>
            <person name="Iacono M."/>
            <person name="Ikeo K."/>
            <person name="Iwama A."/>
            <person name="Ishikawa T."/>
            <person name="Jakt M."/>
            <person name="Kanapin A."/>
            <person name="Katoh M."/>
            <person name="Kawasawa Y."/>
            <person name="Kelso J."/>
            <person name="Kitamura H."/>
            <person name="Kitano H."/>
            <person name="Kollias G."/>
            <person name="Krishnan S.P."/>
            <person name="Kruger A."/>
            <person name="Kummerfeld S.K."/>
            <person name="Kurochkin I.V."/>
            <person name="Lareau L.F."/>
            <person name="Lazarevic D."/>
            <person name="Lipovich L."/>
            <person name="Liu J."/>
            <person name="Liuni S."/>
            <person name="McWilliam S."/>
            <person name="Madan Babu M."/>
            <person name="Madera M."/>
            <person name="Marchionni L."/>
            <person name="Matsuda H."/>
            <person name="Matsuzawa S."/>
            <person name="Miki H."/>
            <person name="Mignone F."/>
            <person name="Miyake S."/>
            <person name="Morris K."/>
            <person name="Mottagui-Tabar S."/>
            <person name="Mulder N."/>
            <person name="Nakano N."/>
            <person name="Nakauchi H."/>
            <person name="Ng P."/>
            <person name="Nilsson R."/>
            <person name="Nishiguchi S."/>
            <person name="Nishikawa S."/>
            <person name="Nori F."/>
            <person name="Ohara O."/>
            <person name="Okazaki Y."/>
            <person name="Orlando V."/>
            <person name="Pang K.C."/>
            <person name="Pavan W.J."/>
            <person name="Pavesi G."/>
            <person name="Pesole G."/>
            <person name="Petrovsky N."/>
            <person name="Piazza S."/>
            <person name="Reed J."/>
            <person name="Reid J.F."/>
            <person name="Ring B.Z."/>
            <person name="Ringwald M."/>
            <person name="Rost B."/>
            <person name="Ruan Y."/>
            <person name="Salzberg S.L."/>
            <person name="Sandelin A."/>
            <person name="Schneider C."/>
            <person name="Schoenbach C."/>
            <person name="Sekiguchi K."/>
            <person name="Semple C.A."/>
            <person name="Seno S."/>
            <person name="Sessa L."/>
            <person name="Sheng Y."/>
            <person name="Shibata Y."/>
            <person name="Shimada H."/>
            <person name="Shimada K."/>
            <person name="Silva D."/>
            <person name="Sinclair B."/>
            <person name="Sperling S."/>
            <person name="Stupka E."/>
            <person name="Sugiura K."/>
            <person name="Sultana R."/>
            <person name="Takenaka Y."/>
            <person name="Taki K."/>
            <person name="Tammoja K."/>
            <person name="Tan S.L."/>
            <person name="Tang S."/>
            <person name="Taylor M.S."/>
            <person name="Tegner J."/>
            <person name="Teichmann S.A."/>
            <person name="Ueda H.R."/>
            <person name="van Nimwegen E."/>
            <person name="Verardo R."/>
            <person name="Wei C.L."/>
            <person name="Yagi K."/>
            <person name="Yamanishi H."/>
            <person name="Zabarovsky E."/>
            <person name="Zhu S."/>
            <person name="Zimmer A."/>
            <person name="Hide W."/>
            <person name="Bult C."/>
            <person name="Grimmond S.M."/>
            <person name="Teasdale R.D."/>
            <person name="Liu E.T."/>
            <person name="Brusic V."/>
            <person name="Quackenbush J."/>
            <person name="Wahlestedt C."/>
            <person name="Mattick J.S."/>
            <person name="Hume D.A."/>
            <person name="Kai C."/>
            <person name="Sasaki D."/>
            <person name="Tomaru Y."/>
            <person name="Fukuda S."/>
            <person name="Kanamori-Katayama M."/>
            <person name="Suzuki M."/>
            <person name="Aoki J."/>
            <person name="Arakawa T."/>
            <person name="Iida J."/>
            <person name="Imamura K."/>
            <person name="Itoh M."/>
            <person name="Kato T."/>
            <person name="Kawaji H."/>
            <person name="Kawagashira N."/>
            <person name="Kawashima T."/>
            <person name="Kojima M."/>
            <person name="Kondo S."/>
            <person name="Konno H."/>
            <person name="Nakano K."/>
            <person name="Ninomiya N."/>
            <person name="Nishio T."/>
            <person name="Okada M."/>
            <person name="Plessy C."/>
            <person name="Shibata K."/>
            <person name="Shiraki T."/>
            <person name="Suzuki S."/>
            <person name="Tagami M."/>
            <person name="Waki K."/>
            <person name="Watahiki A."/>
            <person name="Okamura-Oho Y."/>
            <person name="Suzuki H."/>
            <person name="Kawai J."/>
            <person name="Hayashizaki Y."/>
        </authorList>
    </citation>
    <scope>NUCLEOTIDE SEQUENCE [LARGE SCALE MRNA] (ISOFORMS 2; 3 AND 4)</scope>
    <source>
        <strain>C57BL/6J</strain>
        <strain>NOD</strain>
        <tissue>Spleen</tissue>
        <tissue>Thymus</tissue>
    </source>
</reference>
<reference key="2">
    <citation type="journal article" date="2009" name="PLoS Biol.">
        <title>Lineage-specific biology revealed by a finished genome assembly of the mouse.</title>
        <authorList>
            <person name="Church D.M."/>
            <person name="Goodstadt L."/>
            <person name="Hillier L.W."/>
            <person name="Zody M.C."/>
            <person name="Goldstein S."/>
            <person name="She X."/>
            <person name="Bult C.J."/>
            <person name="Agarwala R."/>
            <person name="Cherry J.L."/>
            <person name="DiCuccio M."/>
            <person name="Hlavina W."/>
            <person name="Kapustin Y."/>
            <person name="Meric P."/>
            <person name="Maglott D."/>
            <person name="Birtle Z."/>
            <person name="Marques A.C."/>
            <person name="Graves T."/>
            <person name="Zhou S."/>
            <person name="Teague B."/>
            <person name="Potamousis K."/>
            <person name="Churas C."/>
            <person name="Place M."/>
            <person name="Herschleb J."/>
            <person name="Runnheim R."/>
            <person name="Forrest D."/>
            <person name="Amos-Landgraf J."/>
            <person name="Schwartz D.C."/>
            <person name="Cheng Z."/>
            <person name="Lindblad-Toh K."/>
            <person name="Eichler E.E."/>
            <person name="Ponting C.P."/>
        </authorList>
    </citation>
    <scope>NUCLEOTIDE SEQUENCE [LARGE SCALE GENOMIC DNA]</scope>
    <source>
        <strain>C57BL/6J</strain>
    </source>
</reference>
<reference key="3">
    <citation type="journal article" date="2004" name="Genome Res.">
        <title>The status, quality, and expansion of the NIH full-length cDNA project: the Mammalian Gene Collection (MGC).</title>
        <authorList>
            <consortium name="The MGC Project Team"/>
        </authorList>
    </citation>
    <scope>NUCLEOTIDE SEQUENCE [LARGE SCALE MRNA] (ISOFORM 1)</scope>
    <source>
        <strain>FVB/N</strain>
        <tissue>Mammary tumor</tissue>
    </source>
</reference>
<reference key="4">
    <citation type="journal article" date="2010" name="Cell">
        <title>A tissue-specific atlas of mouse protein phosphorylation and expression.</title>
        <authorList>
            <person name="Huttlin E.L."/>
            <person name="Jedrychowski M.P."/>
            <person name="Elias J.E."/>
            <person name="Goswami T."/>
            <person name="Rad R."/>
            <person name="Beausoleil S.A."/>
            <person name="Villen J."/>
            <person name="Haas W."/>
            <person name="Sowa M.E."/>
            <person name="Gygi S.P."/>
        </authorList>
    </citation>
    <scope>PHOSPHORYLATION [LARGE SCALE ANALYSIS] AT SER-204</scope>
    <scope>IDENTIFICATION BY MASS SPECTROMETRY [LARGE SCALE ANALYSIS]</scope>
    <source>
        <tissue>Lung</tissue>
        <tissue>Spleen</tissue>
    </source>
</reference>
<evidence type="ECO:0000250" key="1"/>
<evidence type="ECO:0000250" key="2">
    <source>
        <dbReference type="UniProtKB" id="Q53QZ3"/>
    </source>
</evidence>
<evidence type="ECO:0000250" key="3">
    <source>
        <dbReference type="UniProtKB" id="Q6AYC5"/>
    </source>
</evidence>
<evidence type="ECO:0000255" key="4">
    <source>
        <dbReference type="PROSITE-ProRule" id="PRU00145"/>
    </source>
</evidence>
<evidence type="ECO:0000255" key="5">
    <source>
        <dbReference type="PROSITE-ProRule" id="PRU00172"/>
    </source>
</evidence>
<evidence type="ECO:0000303" key="6">
    <source>
    </source>
</evidence>
<evidence type="ECO:0000305" key="7"/>
<evidence type="ECO:0007744" key="8">
    <source>
    </source>
</evidence>
<protein>
    <recommendedName>
        <fullName>Rho GTPase-activating protein 15</fullName>
    </recommendedName>
    <alternativeName>
        <fullName>ArhGAP15</fullName>
    </alternativeName>
    <alternativeName>
        <fullName>Rho-type GTPase-activating protein 15</fullName>
    </alternativeName>
</protein>
<proteinExistence type="evidence at protein level"/>
<comment type="function">
    <text evidence="1">GTPase activator for the Rho-type GTPases by converting them to an inactive GDP-bound state. Has activity toward RAC1. Overexpression results in an increase in actin stress fibers and cell contraction (By similarity).</text>
</comment>
<comment type="subcellular location">
    <subcellularLocation>
        <location evidence="1">Cytoplasm</location>
    </subcellularLocation>
    <subcellularLocation>
        <location evidence="1">Membrane</location>
        <topology evidence="1">Peripheral membrane protein</topology>
    </subcellularLocation>
</comment>
<comment type="alternative products">
    <event type="alternative splicing"/>
    <isoform>
        <id>Q811M1-1</id>
        <name>1</name>
        <sequence type="displayed"/>
    </isoform>
    <isoform>
        <id>Q811M1-2</id>
        <name>2</name>
        <sequence type="described" ref="VSP_031051 VSP_031052"/>
    </isoform>
    <isoform>
        <id>Q811M1-3</id>
        <name>3</name>
        <sequence type="described" ref="VSP_031049 VSP_031050"/>
    </isoform>
    <isoform>
        <id>Q811M1-4</id>
        <name>4</name>
        <sequence type="described" ref="VSP_031048"/>
    </isoform>
</comment>
<comment type="domain">
    <text evidence="1">The PH domain is required for localization to the membrane.</text>
</comment>
<comment type="sequence caution" evidence="7">
    <conflict type="erroneous initiation">
        <sequence resource="EMBL-CDS" id="AAH34881"/>
    </conflict>
</comment>
<organism>
    <name type="scientific">Mus musculus</name>
    <name type="common">Mouse</name>
    <dbReference type="NCBI Taxonomy" id="10090"/>
    <lineage>
        <taxon>Eukaryota</taxon>
        <taxon>Metazoa</taxon>
        <taxon>Chordata</taxon>
        <taxon>Craniata</taxon>
        <taxon>Vertebrata</taxon>
        <taxon>Euteleostomi</taxon>
        <taxon>Mammalia</taxon>
        <taxon>Eutheria</taxon>
        <taxon>Euarchontoglires</taxon>
        <taxon>Glires</taxon>
        <taxon>Rodentia</taxon>
        <taxon>Myomorpha</taxon>
        <taxon>Muroidea</taxon>
        <taxon>Muridae</taxon>
        <taxon>Murinae</taxon>
        <taxon>Mus</taxon>
        <taxon>Mus</taxon>
    </lineage>
</organism>
<accession>Q811M1</accession>
<accession>Q3T9M8</accession>
<accession>Q3TCU0</accession>
<accession>Q8C0I5</accession>
<accession>Q8JZY0</accession>